<sequence length="504" mass="54302">MTQTNGFDALHAHAQRLRGAAIPALLAAEPERPTQYAWQVGPLYFNFARQKYDRAALDALFAIARERDLAGAFQRLFRGEQVNVTEQRAALHTALRGDLTDAPVASEAYATAAEVRQRMGALIQQLEATDVTDIVSVGIGGSDLGPRLVADALRPVSGARLRVHFVSNVDGAAMQRTLATLDPARTAGILISKTFGTQETLLNGSILHAWLGGSERLYAVSANPERAAKAFDIAPGRVLPMWDWVGGRYSLWSAVGFPIALAIGFERFEQLLEGAAQFDAHALNTPLEENVAVLHGLTAVWNRNLLGSATHAVMTYDQRLALLPAYLQQLVMESLGKRVKLDGSAVDSDTVSVWWGGAGTDVQHSFFQALHQGTSVVPADFIGTVHNDDPYAENHVALMANVLAQTEALANGQDSSDPHRSYPGGRPSTVILLDALTPQALGALISMYEHSVYVQSVMWGINAFDQFGVELGKQLASQLLPALKGESADVADPVTRELLSKLRG</sequence>
<evidence type="ECO:0000255" key="1">
    <source>
        <dbReference type="HAMAP-Rule" id="MF_00473"/>
    </source>
</evidence>
<accession>Q5H0A7</accession>
<keyword id="KW-0963">Cytoplasm</keyword>
<keyword id="KW-0312">Gluconeogenesis</keyword>
<keyword id="KW-0324">Glycolysis</keyword>
<keyword id="KW-0413">Isomerase</keyword>
<keyword id="KW-1185">Reference proteome</keyword>
<comment type="function">
    <text evidence="1">Catalyzes the reversible isomerization of glucose-6-phosphate to fructose-6-phosphate.</text>
</comment>
<comment type="catalytic activity">
    <reaction evidence="1">
        <text>alpha-D-glucose 6-phosphate = beta-D-fructose 6-phosphate</text>
        <dbReference type="Rhea" id="RHEA:11816"/>
        <dbReference type="ChEBI" id="CHEBI:57634"/>
        <dbReference type="ChEBI" id="CHEBI:58225"/>
        <dbReference type="EC" id="5.3.1.9"/>
    </reaction>
</comment>
<comment type="pathway">
    <text evidence="1">Carbohydrate biosynthesis; gluconeogenesis.</text>
</comment>
<comment type="pathway">
    <text evidence="1">Carbohydrate degradation; glycolysis; D-glyceraldehyde 3-phosphate and glycerone phosphate from D-glucose: step 2/4.</text>
</comment>
<comment type="subcellular location">
    <subcellularLocation>
        <location evidence="1">Cytoplasm</location>
    </subcellularLocation>
</comment>
<comment type="similarity">
    <text evidence="1">Belongs to the GPI family.</text>
</comment>
<reference key="1">
    <citation type="journal article" date="2005" name="Nucleic Acids Res.">
        <title>The genome sequence of Xanthomonas oryzae pathovar oryzae KACC10331, the bacterial blight pathogen of rice.</title>
        <authorList>
            <person name="Lee B.-M."/>
            <person name="Park Y.-J."/>
            <person name="Park D.-S."/>
            <person name="Kang H.-W."/>
            <person name="Kim J.-G."/>
            <person name="Song E.-S."/>
            <person name="Park I.-C."/>
            <person name="Yoon U.-H."/>
            <person name="Hahn J.-H."/>
            <person name="Koo B.-S."/>
            <person name="Lee G.-B."/>
            <person name="Kim H."/>
            <person name="Park H.-S."/>
            <person name="Yoon K.-O."/>
            <person name="Kim J.-H."/>
            <person name="Jung C.-H."/>
            <person name="Koh N.-H."/>
            <person name="Seo J.-S."/>
            <person name="Go S.-J."/>
        </authorList>
    </citation>
    <scope>NUCLEOTIDE SEQUENCE [LARGE SCALE GENOMIC DNA]</scope>
    <source>
        <strain>KACC10331 / KXO85</strain>
    </source>
</reference>
<dbReference type="EC" id="5.3.1.9" evidence="1"/>
<dbReference type="EMBL" id="AE013598">
    <property type="protein sequence ID" value="AAW75614.1"/>
    <property type="molecule type" value="Genomic_DNA"/>
</dbReference>
<dbReference type="SMR" id="Q5H0A7"/>
<dbReference type="STRING" id="291331.XOO2360"/>
<dbReference type="KEGG" id="xoo:XOO2360"/>
<dbReference type="HOGENOM" id="CLU_017947_3_1_6"/>
<dbReference type="UniPathway" id="UPA00109">
    <property type="reaction ID" value="UER00181"/>
</dbReference>
<dbReference type="UniPathway" id="UPA00138"/>
<dbReference type="Proteomes" id="UP000006735">
    <property type="component" value="Chromosome"/>
</dbReference>
<dbReference type="GO" id="GO:0005829">
    <property type="term" value="C:cytosol"/>
    <property type="evidence" value="ECO:0007669"/>
    <property type="project" value="TreeGrafter"/>
</dbReference>
<dbReference type="GO" id="GO:0097367">
    <property type="term" value="F:carbohydrate derivative binding"/>
    <property type="evidence" value="ECO:0007669"/>
    <property type="project" value="InterPro"/>
</dbReference>
<dbReference type="GO" id="GO:0004347">
    <property type="term" value="F:glucose-6-phosphate isomerase activity"/>
    <property type="evidence" value="ECO:0007669"/>
    <property type="project" value="UniProtKB-UniRule"/>
</dbReference>
<dbReference type="GO" id="GO:0048029">
    <property type="term" value="F:monosaccharide binding"/>
    <property type="evidence" value="ECO:0007669"/>
    <property type="project" value="TreeGrafter"/>
</dbReference>
<dbReference type="GO" id="GO:0006094">
    <property type="term" value="P:gluconeogenesis"/>
    <property type="evidence" value="ECO:0007669"/>
    <property type="project" value="UniProtKB-UniRule"/>
</dbReference>
<dbReference type="GO" id="GO:0051156">
    <property type="term" value="P:glucose 6-phosphate metabolic process"/>
    <property type="evidence" value="ECO:0007669"/>
    <property type="project" value="TreeGrafter"/>
</dbReference>
<dbReference type="GO" id="GO:0006096">
    <property type="term" value="P:glycolytic process"/>
    <property type="evidence" value="ECO:0007669"/>
    <property type="project" value="UniProtKB-UniRule"/>
</dbReference>
<dbReference type="CDD" id="cd05015">
    <property type="entry name" value="SIS_PGI_1"/>
    <property type="match status" value="1"/>
</dbReference>
<dbReference type="CDD" id="cd05016">
    <property type="entry name" value="SIS_PGI_2"/>
    <property type="match status" value="1"/>
</dbReference>
<dbReference type="Gene3D" id="1.10.1390.10">
    <property type="match status" value="1"/>
</dbReference>
<dbReference type="Gene3D" id="3.40.50.10490">
    <property type="entry name" value="Glucose-6-phosphate isomerase like protein, domain 1"/>
    <property type="match status" value="2"/>
</dbReference>
<dbReference type="HAMAP" id="MF_00473">
    <property type="entry name" value="G6P_isomerase"/>
    <property type="match status" value="1"/>
</dbReference>
<dbReference type="InterPro" id="IPR001672">
    <property type="entry name" value="G6P_Isomerase"/>
</dbReference>
<dbReference type="InterPro" id="IPR023096">
    <property type="entry name" value="G6P_Isomerase_C"/>
</dbReference>
<dbReference type="InterPro" id="IPR018189">
    <property type="entry name" value="Phosphoglucose_isomerase_CS"/>
</dbReference>
<dbReference type="InterPro" id="IPR046348">
    <property type="entry name" value="SIS_dom_sf"/>
</dbReference>
<dbReference type="InterPro" id="IPR035476">
    <property type="entry name" value="SIS_PGI_1"/>
</dbReference>
<dbReference type="InterPro" id="IPR035482">
    <property type="entry name" value="SIS_PGI_2"/>
</dbReference>
<dbReference type="NCBIfam" id="NF001211">
    <property type="entry name" value="PRK00179.1"/>
    <property type="match status" value="1"/>
</dbReference>
<dbReference type="PANTHER" id="PTHR11469">
    <property type="entry name" value="GLUCOSE-6-PHOSPHATE ISOMERASE"/>
    <property type="match status" value="1"/>
</dbReference>
<dbReference type="PANTHER" id="PTHR11469:SF1">
    <property type="entry name" value="GLUCOSE-6-PHOSPHATE ISOMERASE"/>
    <property type="match status" value="1"/>
</dbReference>
<dbReference type="Pfam" id="PF00342">
    <property type="entry name" value="PGI"/>
    <property type="match status" value="1"/>
</dbReference>
<dbReference type="PRINTS" id="PR00662">
    <property type="entry name" value="G6PISOMERASE"/>
</dbReference>
<dbReference type="SUPFAM" id="SSF53697">
    <property type="entry name" value="SIS domain"/>
    <property type="match status" value="1"/>
</dbReference>
<dbReference type="PROSITE" id="PS00765">
    <property type="entry name" value="P_GLUCOSE_ISOMERASE_1"/>
    <property type="match status" value="1"/>
</dbReference>
<dbReference type="PROSITE" id="PS00174">
    <property type="entry name" value="P_GLUCOSE_ISOMERASE_2"/>
    <property type="match status" value="1"/>
</dbReference>
<dbReference type="PROSITE" id="PS51463">
    <property type="entry name" value="P_GLUCOSE_ISOMERASE_3"/>
    <property type="match status" value="1"/>
</dbReference>
<name>G6PI_XANOR</name>
<organism>
    <name type="scientific">Xanthomonas oryzae pv. oryzae (strain KACC10331 / KXO85)</name>
    <dbReference type="NCBI Taxonomy" id="291331"/>
    <lineage>
        <taxon>Bacteria</taxon>
        <taxon>Pseudomonadati</taxon>
        <taxon>Pseudomonadota</taxon>
        <taxon>Gammaproteobacteria</taxon>
        <taxon>Lysobacterales</taxon>
        <taxon>Lysobacteraceae</taxon>
        <taxon>Xanthomonas</taxon>
    </lineage>
</organism>
<protein>
    <recommendedName>
        <fullName evidence="1">Glucose-6-phosphate isomerase</fullName>
        <shortName evidence="1">GPI</shortName>
        <ecNumber evidence="1">5.3.1.9</ecNumber>
    </recommendedName>
    <alternativeName>
        <fullName evidence="1">Phosphoglucose isomerase</fullName>
        <shortName evidence="1">PGI</shortName>
    </alternativeName>
    <alternativeName>
        <fullName evidence="1">Phosphohexose isomerase</fullName>
        <shortName evidence="1">PHI</shortName>
    </alternativeName>
</protein>
<gene>
    <name evidence="1" type="primary">pgi</name>
    <name type="ordered locus">XOO2360</name>
</gene>
<feature type="chain" id="PRO_0000180772" description="Glucose-6-phosphate isomerase">
    <location>
        <begin position="1"/>
        <end position="504"/>
    </location>
</feature>
<feature type="active site" description="Proton donor" evidence="1">
    <location>
        <position position="333"/>
    </location>
</feature>
<feature type="active site" evidence="1">
    <location>
        <position position="364"/>
    </location>
</feature>
<feature type="active site" evidence="1">
    <location>
        <position position="473"/>
    </location>
</feature>
<proteinExistence type="inferred from homology"/>